<accession>Q5FJB7</accession>
<dbReference type="EC" id="2.1.3.2" evidence="1"/>
<dbReference type="EMBL" id="CP000033">
    <property type="protein sequence ID" value="AAV43207.1"/>
    <property type="molecule type" value="Genomic_DNA"/>
</dbReference>
<dbReference type="RefSeq" id="WP_003548032.1">
    <property type="nucleotide sequence ID" value="NC_006814.3"/>
</dbReference>
<dbReference type="RefSeq" id="YP_194238.1">
    <property type="nucleotide sequence ID" value="NC_006814.3"/>
</dbReference>
<dbReference type="SMR" id="Q5FJB7"/>
<dbReference type="STRING" id="272621.LBA1382"/>
<dbReference type="KEGG" id="lac:LBA1382"/>
<dbReference type="PATRIC" id="fig|272621.13.peg.1308"/>
<dbReference type="eggNOG" id="COG0540">
    <property type="taxonomic scope" value="Bacteria"/>
</dbReference>
<dbReference type="HOGENOM" id="CLU_043846_2_1_9"/>
<dbReference type="OrthoDB" id="9774690at2"/>
<dbReference type="BioCyc" id="LACI272621:G1G49-1356-MONOMER"/>
<dbReference type="UniPathway" id="UPA00070">
    <property type="reaction ID" value="UER00116"/>
</dbReference>
<dbReference type="Proteomes" id="UP000006381">
    <property type="component" value="Chromosome"/>
</dbReference>
<dbReference type="GO" id="GO:0005829">
    <property type="term" value="C:cytosol"/>
    <property type="evidence" value="ECO:0007669"/>
    <property type="project" value="TreeGrafter"/>
</dbReference>
<dbReference type="GO" id="GO:0016597">
    <property type="term" value="F:amino acid binding"/>
    <property type="evidence" value="ECO:0007669"/>
    <property type="project" value="InterPro"/>
</dbReference>
<dbReference type="GO" id="GO:0004070">
    <property type="term" value="F:aspartate carbamoyltransferase activity"/>
    <property type="evidence" value="ECO:0007669"/>
    <property type="project" value="UniProtKB-UniRule"/>
</dbReference>
<dbReference type="GO" id="GO:0006207">
    <property type="term" value="P:'de novo' pyrimidine nucleobase biosynthetic process"/>
    <property type="evidence" value="ECO:0007669"/>
    <property type="project" value="InterPro"/>
</dbReference>
<dbReference type="GO" id="GO:0044205">
    <property type="term" value="P:'de novo' UMP biosynthetic process"/>
    <property type="evidence" value="ECO:0007669"/>
    <property type="project" value="UniProtKB-UniRule"/>
</dbReference>
<dbReference type="GO" id="GO:0006520">
    <property type="term" value="P:amino acid metabolic process"/>
    <property type="evidence" value="ECO:0007669"/>
    <property type="project" value="InterPro"/>
</dbReference>
<dbReference type="FunFam" id="3.40.50.1370:FF:000011">
    <property type="entry name" value="Aspartate carbamoyltransferase"/>
    <property type="match status" value="1"/>
</dbReference>
<dbReference type="Gene3D" id="3.40.50.1370">
    <property type="entry name" value="Aspartate/ornithine carbamoyltransferase"/>
    <property type="match status" value="2"/>
</dbReference>
<dbReference type="HAMAP" id="MF_00001">
    <property type="entry name" value="Asp_carb_tr"/>
    <property type="match status" value="1"/>
</dbReference>
<dbReference type="InterPro" id="IPR006132">
    <property type="entry name" value="Asp/Orn_carbamoyltranf_P-bd"/>
</dbReference>
<dbReference type="InterPro" id="IPR006130">
    <property type="entry name" value="Asp/Orn_carbamoylTrfase"/>
</dbReference>
<dbReference type="InterPro" id="IPR036901">
    <property type="entry name" value="Asp/Orn_carbamoylTrfase_sf"/>
</dbReference>
<dbReference type="InterPro" id="IPR002082">
    <property type="entry name" value="Asp_carbamoyltransf"/>
</dbReference>
<dbReference type="InterPro" id="IPR006131">
    <property type="entry name" value="Asp_carbamoyltransf_Asp/Orn-bd"/>
</dbReference>
<dbReference type="NCBIfam" id="TIGR00670">
    <property type="entry name" value="asp_carb_tr"/>
    <property type="match status" value="1"/>
</dbReference>
<dbReference type="NCBIfam" id="NF002032">
    <property type="entry name" value="PRK00856.1"/>
    <property type="match status" value="1"/>
</dbReference>
<dbReference type="PANTHER" id="PTHR45753:SF6">
    <property type="entry name" value="ASPARTATE CARBAMOYLTRANSFERASE"/>
    <property type="match status" value="1"/>
</dbReference>
<dbReference type="PANTHER" id="PTHR45753">
    <property type="entry name" value="ORNITHINE CARBAMOYLTRANSFERASE, MITOCHONDRIAL"/>
    <property type="match status" value="1"/>
</dbReference>
<dbReference type="Pfam" id="PF00185">
    <property type="entry name" value="OTCace"/>
    <property type="match status" value="1"/>
</dbReference>
<dbReference type="Pfam" id="PF02729">
    <property type="entry name" value="OTCace_N"/>
    <property type="match status" value="1"/>
</dbReference>
<dbReference type="PRINTS" id="PR00100">
    <property type="entry name" value="AOTCASE"/>
</dbReference>
<dbReference type="PRINTS" id="PR00101">
    <property type="entry name" value="ATCASE"/>
</dbReference>
<dbReference type="SUPFAM" id="SSF53671">
    <property type="entry name" value="Aspartate/ornithine carbamoyltransferase"/>
    <property type="match status" value="1"/>
</dbReference>
<organism>
    <name type="scientific">Lactobacillus acidophilus (strain ATCC 700396 / NCK56 / N2 / NCFM)</name>
    <dbReference type="NCBI Taxonomy" id="272621"/>
    <lineage>
        <taxon>Bacteria</taxon>
        <taxon>Bacillati</taxon>
        <taxon>Bacillota</taxon>
        <taxon>Bacilli</taxon>
        <taxon>Lactobacillales</taxon>
        <taxon>Lactobacillaceae</taxon>
        <taxon>Lactobacillus</taxon>
    </lineage>
</organism>
<reference key="1">
    <citation type="journal article" date="2005" name="Proc. Natl. Acad. Sci. U.S.A.">
        <title>Complete genome sequence of the probiotic lactic acid bacterium Lactobacillus acidophilus NCFM.</title>
        <authorList>
            <person name="Altermann E."/>
            <person name="Russell W.M."/>
            <person name="Azcarate-Peril M.A."/>
            <person name="Barrangou R."/>
            <person name="Buck B.L."/>
            <person name="McAuliffe O."/>
            <person name="Souther N."/>
            <person name="Dobson A."/>
            <person name="Duong T."/>
            <person name="Callanan M."/>
            <person name="Lick S."/>
            <person name="Hamrick A."/>
            <person name="Cano R."/>
            <person name="Klaenhammer T.R."/>
        </authorList>
    </citation>
    <scope>NUCLEOTIDE SEQUENCE [LARGE SCALE GENOMIC DNA]</scope>
    <source>
        <strain>ATCC 700396 / NCK56 / N2 / NCFM</strain>
    </source>
</reference>
<feature type="chain" id="PRO_0000113143" description="Aspartate carbamoyltransferase catalytic subunit">
    <location>
        <begin position="1"/>
        <end position="318"/>
    </location>
</feature>
<feature type="binding site" evidence="1">
    <location>
        <position position="58"/>
    </location>
    <ligand>
        <name>carbamoyl phosphate</name>
        <dbReference type="ChEBI" id="CHEBI:58228"/>
    </ligand>
</feature>
<feature type="binding site" evidence="1">
    <location>
        <position position="59"/>
    </location>
    <ligand>
        <name>carbamoyl phosphate</name>
        <dbReference type="ChEBI" id="CHEBI:58228"/>
    </ligand>
</feature>
<feature type="binding site" evidence="1">
    <location>
        <position position="86"/>
    </location>
    <ligand>
        <name>L-aspartate</name>
        <dbReference type="ChEBI" id="CHEBI:29991"/>
    </ligand>
</feature>
<feature type="binding site" evidence="1">
    <location>
        <position position="108"/>
    </location>
    <ligand>
        <name>carbamoyl phosphate</name>
        <dbReference type="ChEBI" id="CHEBI:58228"/>
    </ligand>
</feature>
<feature type="binding site" evidence="1">
    <location>
        <position position="141"/>
    </location>
    <ligand>
        <name>carbamoyl phosphate</name>
        <dbReference type="ChEBI" id="CHEBI:58228"/>
    </ligand>
</feature>
<feature type="binding site" evidence="1">
    <location>
        <position position="144"/>
    </location>
    <ligand>
        <name>carbamoyl phosphate</name>
        <dbReference type="ChEBI" id="CHEBI:58228"/>
    </ligand>
</feature>
<feature type="binding site" evidence="1">
    <location>
        <position position="174"/>
    </location>
    <ligand>
        <name>L-aspartate</name>
        <dbReference type="ChEBI" id="CHEBI:29991"/>
    </ligand>
</feature>
<feature type="binding site" evidence="1">
    <location>
        <position position="226"/>
    </location>
    <ligand>
        <name>L-aspartate</name>
        <dbReference type="ChEBI" id="CHEBI:29991"/>
    </ligand>
</feature>
<feature type="binding site" evidence="1">
    <location>
        <position position="270"/>
    </location>
    <ligand>
        <name>carbamoyl phosphate</name>
        <dbReference type="ChEBI" id="CHEBI:58228"/>
    </ligand>
</feature>
<feature type="binding site" evidence="1">
    <location>
        <position position="271"/>
    </location>
    <ligand>
        <name>carbamoyl phosphate</name>
        <dbReference type="ChEBI" id="CHEBI:58228"/>
    </ligand>
</feature>
<proteinExistence type="inferred from homology"/>
<comment type="function">
    <text evidence="1">Catalyzes the condensation of carbamoyl phosphate and aspartate to form carbamoyl aspartate and inorganic phosphate, the committed step in the de novo pyrimidine nucleotide biosynthesis pathway.</text>
</comment>
<comment type="catalytic activity">
    <reaction evidence="1">
        <text>carbamoyl phosphate + L-aspartate = N-carbamoyl-L-aspartate + phosphate + H(+)</text>
        <dbReference type="Rhea" id="RHEA:20013"/>
        <dbReference type="ChEBI" id="CHEBI:15378"/>
        <dbReference type="ChEBI" id="CHEBI:29991"/>
        <dbReference type="ChEBI" id="CHEBI:32814"/>
        <dbReference type="ChEBI" id="CHEBI:43474"/>
        <dbReference type="ChEBI" id="CHEBI:58228"/>
        <dbReference type="EC" id="2.1.3.2"/>
    </reaction>
</comment>
<comment type="pathway">
    <text evidence="1">Pyrimidine metabolism; UMP biosynthesis via de novo pathway; (S)-dihydroorotate from bicarbonate: step 2/3.</text>
</comment>
<comment type="subunit">
    <text evidence="1">Heterododecamer (2C3:3R2) of six catalytic PyrB chains organized as two trimers (C3), and six regulatory PyrI chains organized as three dimers (R2).</text>
</comment>
<comment type="similarity">
    <text evidence="1">Belongs to the aspartate/ornithine carbamoyltransferase superfamily. ATCase family.</text>
</comment>
<name>PYRB_LACAC</name>
<evidence type="ECO:0000255" key="1">
    <source>
        <dbReference type="HAMAP-Rule" id="MF_00001"/>
    </source>
</evidence>
<sequence length="318" mass="36553">MENLNLVSLPHFVNVENLDVEEVEALIKRAEYFKKGGATPRLTTPVYITNMFFEDSSRTHTSFEMAERKLGLIVIPFDPAHSSVNKGETLYDTSLIMDALGVNIEVIRHSRNEYYNDLIDLKEHQHLNMGIINAGDGSGQHPSQCMLDMMTIHEHFGHFKDLKVAIVGDITNSRVAKSDMELLTRLGAKVYFSGPSYWYDKEFDKYGKFEELDKLIPDMDVMMLLRVQHERHADDPNEKAFDAQEYHEKYGINHKRYEELKPDTIIMHPGPINHDVELSGNLVESKKCMFVRQMQNGVFMRMAMIEAVLRGRKLGGLE</sequence>
<gene>
    <name evidence="1" type="primary">pyrB</name>
    <name type="ordered locus">LBA1382</name>
</gene>
<keyword id="KW-0665">Pyrimidine biosynthesis</keyword>
<keyword id="KW-1185">Reference proteome</keyword>
<keyword id="KW-0808">Transferase</keyword>
<protein>
    <recommendedName>
        <fullName evidence="1">Aspartate carbamoyltransferase catalytic subunit</fullName>
        <ecNumber evidence="1">2.1.3.2</ecNumber>
    </recommendedName>
    <alternativeName>
        <fullName evidence="1">Aspartate transcarbamylase</fullName>
        <shortName evidence="1">ATCase</shortName>
    </alternativeName>
</protein>